<gene>
    <name type="primary">fucA</name>
    <name type="ordered locus">MMP1187</name>
</gene>
<comment type="function">
    <text evidence="2">Involved in the biosynthesis of the coenzyme F420 which requires phospholactate produced via the aldol cleavage of L-fuculose 1-phosphate and the NAD(+)-dependent oxidation of (S)-lactaldehyde. Catalyzes the reversible cleavage of L-fuculose 1-phosphate (Fuc1P) to yield dihydroxyacetone phosphate (DHAP) and S-lactaldehyde.</text>
</comment>
<comment type="catalytic activity">
    <reaction evidence="2">
        <text>L-fuculose 1-phosphate = (S)-lactaldehyde + dihydroxyacetone phosphate</text>
        <dbReference type="Rhea" id="RHEA:12933"/>
        <dbReference type="ChEBI" id="CHEBI:18041"/>
        <dbReference type="ChEBI" id="CHEBI:57642"/>
        <dbReference type="ChEBI" id="CHEBI:57846"/>
        <dbReference type="EC" id="4.1.2.17"/>
    </reaction>
</comment>
<comment type="cofactor">
    <cofactor evidence="2">
        <name>Zn(2+)</name>
        <dbReference type="ChEBI" id="CHEBI:29105"/>
    </cofactor>
    <text evidence="1">Binds 1 zinc ion per subunit.</text>
</comment>
<comment type="pathway">
    <text evidence="2">Cofactor biosynthesis; coenzyme F420 biosynthesis.</text>
</comment>
<comment type="subunit">
    <text evidence="2">Homotetramer.</text>
</comment>
<comment type="similarity">
    <text evidence="2">Belongs to the aldolase class II family. AraD/FucA subfamily.</text>
</comment>
<feature type="chain" id="PRO_0000342597" description="L-fuculose phosphate aldolase">
    <location>
        <begin position="1"/>
        <end position="180"/>
    </location>
</feature>
<feature type="active site" description="Proton donor/acceptor" evidence="1">
    <location>
        <position position="68"/>
    </location>
</feature>
<feature type="binding site" evidence="1">
    <location>
        <begin position="24"/>
        <end position="25"/>
    </location>
    <ligand>
        <name>substrate</name>
    </ligand>
</feature>
<feature type="binding site" evidence="1">
    <location>
        <begin position="39"/>
        <end position="40"/>
    </location>
    <ligand>
        <name>substrate</name>
    </ligand>
</feature>
<feature type="binding site" evidence="1">
    <location>
        <begin position="66"/>
        <end position="67"/>
    </location>
    <ligand>
        <name>substrate</name>
    </ligand>
</feature>
<feature type="binding site" evidence="1">
    <location>
        <position position="68"/>
    </location>
    <ligand>
        <name>Zn(2+)</name>
        <dbReference type="ChEBI" id="CHEBI:29105"/>
        <note>catalytic</note>
    </ligand>
</feature>
<feature type="binding site" evidence="1">
    <location>
        <position position="87"/>
    </location>
    <ligand>
        <name>Zn(2+)</name>
        <dbReference type="ChEBI" id="CHEBI:29105"/>
        <note>catalytic</note>
    </ligand>
</feature>
<feature type="binding site" evidence="1">
    <location>
        <position position="89"/>
    </location>
    <ligand>
        <name>Zn(2+)</name>
        <dbReference type="ChEBI" id="CHEBI:29105"/>
        <note>catalytic</note>
    </ligand>
</feature>
<feature type="binding site" evidence="1">
    <location>
        <position position="147"/>
    </location>
    <ligand>
        <name>Zn(2+)</name>
        <dbReference type="ChEBI" id="CHEBI:29105"/>
        <note>catalytic</note>
    </ligand>
</feature>
<accession>Q6LY06</accession>
<name>FUCA_METMP</name>
<keyword id="KW-0456">Lyase</keyword>
<keyword id="KW-0479">Metal-binding</keyword>
<keyword id="KW-1185">Reference proteome</keyword>
<keyword id="KW-0862">Zinc</keyword>
<dbReference type="EC" id="4.1.2.17" evidence="2"/>
<dbReference type="EMBL" id="BX950229">
    <property type="protein sequence ID" value="CAF30743.1"/>
    <property type="molecule type" value="Genomic_DNA"/>
</dbReference>
<dbReference type="RefSeq" id="WP_011171131.1">
    <property type="nucleotide sequence ID" value="NC_005791.1"/>
</dbReference>
<dbReference type="SMR" id="Q6LY06"/>
<dbReference type="STRING" id="267377.MMP1187"/>
<dbReference type="EnsemblBacteria" id="CAF30743">
    <property type="protein sequence ID" value="CAF30743"/>
    <property type="gene ID" value="MMP1187"/>
</dbReference>
<dbReference type="GeneID" id="2762613"/>
<dbReference type="KEGG" id="mmp:MMP1187"/>
<dbReference type="PATRIC" id="fig|267377.15.peg.1220"/>
<dbReference type="eggNOG" id="arCOG04226">
    <property type="taxonomic scope" value="Archaea"/>
</dbReference>
<dbReference type="HOGENOM" id="CLU_006033_3_4_2"/>
<dbReference type="OrthoDB" id="18709at2157"/>
<dbReference type="UniPathway" id="UPA00071"/>
<dbReference type="Proteomes" id="UP000000590">
    <property type="component" value="Chromosome"/>
</dbReference>
<dbReference type="GO" id="GO:0005829">
    <property type="term" value="C:cytosol"/>
    <property type="evidence" value="ECO:0007669"/>
    <property type="project" value="TreeGrafter"/>
</dbReference>
<dbReference type="GO" id="GO:0008738">
    <property type="term" value="F:L-fuculose-phosphate aldolase activity"/>
    <property type="evidence" value="ECO:0000250"/>
    <property type="project" value="UniProtKB"/>
</dbReference>
<dbReference type="GO" id="GO:0008270">
    <property type="term" value="F:zinc ion binding"/>
    <property type="evidence" value="ECO:0000250"/>
    <property type="project" value="UniProtKB"/>
</dbReference>
<dbReference type="GO" id="GO:0019323">
    <property type="term" value="P:pentose catabolic process"/>
    <property type="evidence" value="ECO:0007669"/>
    <property type="project" value="TreeGrafter"/>
</dbReference>
<dbReference type="FunFam" id="3.40.225.10:FF:000008">
    <property type="entry name" value="Sugar aldolase"/>
    <property type="match status" value="1"/>
</dbReference>
<dbReference type="Gene3D" id="3.40.225.10">
    <property type="entry name" value="Class II aldolase/adducin N-terminal domain"/>
    <property type="match status" value="1"/>
</dbReference>
<dbReference type="InterPro" id="IPR050197">
    <property type="entry name" value="Aldolase_class_II_sugar_metab"/>
</dbReference>
<dbReference type="InterPro" id="IPR001303">
    <property type="entry name" value="Aldolase_II/adducin_N"/>
</dbReference>
<dbReference type="InterPro" id="IPR036409">
    <property type="entry name" value="Aldolase_II/adducin_N_sf"/>
</dbReference>
<dbReference type="InterPro" id="IPR053406">
    <property type="entry name" value="Fuculose-P_aldolase"/>
</dbReference>
<dbReference type="NCBIfam" id="NF040649">
    <property type="entry name" value="FucA_Meth"/>
    <property type="match status" value="1"/>
</dbReference>
<dbReference type="PANTHER" id="PTHR22789:SF0">
    <property type="entry name" value="3-OXO-TETRONATE 4-PHOSPHATE DECARBOXYLASE-RELATED"/>
    <property type="match status" value="1"/>
</dbReference>
<dbReference type="PANTHER" id="PTHR22789">
    <property type="entry name" value="FUCULOSE PHOSPHATE ALDOLASE"/>
    <property type="match status" value="1"/>
</dbReference>
<dbReference type="Pfam" id="PF00596">
    <property type="entry name" value="Aldolase_II"/>
    <property type="match status" value="1"/>
</dbReference>
<dbReference type="SMART" id="SM01007">
    <property type="entry name" value="Aldolase_II"/>
    <property type="match status" value="1"/>
</dbReference>
<dbReference type="SUPFAM" id="SSF53639">
    <property type="entry name" value="AraD/HMP-PK domain-like"/>
    <property type="match status" value="1"/>
</dbReference>
<sequence length="180" mass="20110">MDLTEFIKICRLLYDRKYVVGSGGNVSIRDGNLIYITPTGLSLGFLTKEDICIADLNGNIIKGKPTSELNMHLKIYQNKDSINAVVHTHSMYCTAFSALDKKLKLVTPEAEMVVKKIAYVDYFPCGSLELAENVSECIEDSIILKNHGIVTLGKDITEAYIKTEVLEEVAQLNYIMNNLK</sequence>
<reference key="1">
    <citation type="journal article" date="2004" name="J. Bacteriol.">
        <title>Complete genome sequence of the genetically tractable hydrogenotrophic methanogen Methanococcus maripaludis.</title>
        <authorList>
            <person name="Hendrickson E.L."/>
            <person name="Kaul R."/>
            <person name="Zhou Y."/>
            <person name="Bovee D."/>
            <person name="Chapman P."/>
            <person name="Chung J."/>
            <person name="Conway de Macario E."/>
            <person name="Dodsworth J.A."/>
            <person name="Gillett W."/>
            <person name="Graham D.E."/>
            <person name="Hackett M."/>
            <person name="Haydock A.K."/>
            <person name="Kang A."/>
            <person name="Land M.L."/>
            <person name="Levy R."/>
            <person name="Lie T.J."/>
            <person name="Major T.A."/>
            <person name="Moore B.C."/>
            <person name="Porat I."/>
            <person name="Palmeiri A."/>
            <person name="Rouse G."/>
            <person name="Saenphimmachak C."/>
            <person name="Soell D."/>
            <person name="Van Dien S."/>
            <person name="Wang T."/>
            <person name="Whitman W.B."/>
            <person name="Xia Q."/>
            <person name="Zhang Y."/>
            <person name="Larimer F.W."/>
            <person name="Olson M.V."/>
            <person name="Leigh J.A."/>
        </authorList>
    </citation>
    <scope>NUCLEOTIDE SEQUENCE [LARGE SCALE GENOMIC DNA]</scope>
    <source>
        <strain>DSM 14266 / JCM 13030 / NBRC 101832 / S2 / LL</strain>
    </source>
</reference>
<proteinExistence type="inferred from homology"/>
<evidence type="ECO:0000250" key="1">
    <source>
        <dbReference type="UniProtKB" id="P0AB87"/>
    </source>
</evidence>
<evidence type="ECO:0000250" key="2">
    <source>
        <dbReference type="UniProtKB" id="Q58813"/>
    </source>
</evidence>
<protein>
    <recommendedName>
        <fullName evidence="2">L-fuculose phosphate aldolase</fullName>
        <ecNumber evidence="2">4.1.2.17</ecNumber>
    </recommendedName>
    <alternativeName>
        <fullName evidence="2">L-fuculose-1-phosphate aldolase</fullName>
    </alternativeName>
</protein>
<organism>
    <name type="scientific">Methanococcus maripaludis (strain DSM 14266 / JCM 13030 / NBRC 101832 / S2 / LL)</name>
    <dbReference type="NCBI Taxonomy" id="267377"/>
    <lineage>
        <taxon>Archaea</taxon>
        <taxon>Methanobacteriati</taxon>
        <taxon>Methanobacteriota</taxon>
        <taxon>Methanomada group</taxon>
        <taxon>Methanococci</taxon>
        <taxon>Methanococcales</taxon>
        <taxon>Methanococcaceae</taxon>
        <taxon>Methanococcus</taxon>
    </lineage>
</organism>